<keyword id="KW-0963">Cytoplasm</keyword>
<keyword id="KW-0378">Hydrolase</keyword>
<keyword id="KW-0694">RNA-binding</keyword>
<keyword id="KW-0820">tRNA-binding</keyword>
<reference key="1">
    <citation type="submission" date="2007-12" db="EMBL/GenBank/DDBJ databases">
        <title>Brucella suis ATCC 23445 whole genome shotgun sequencing project.</title>
        <authorList>
            <person name="Setubal J.C."/>
            <person name="Bowns C."/>
            <person name="Boyle S."/>
            <person name="Crasta O.R."/>
            <person name="Czar M.J."/>
            <person name="Dharmanolla C."/>
            <person name="Gillespie J.J."/>
            <person name="Kenyon R.W."/>
            <person name="Lu J."/>
            <person name="Mane S."/>
            <person name="Mohapatra S."/>
            <person name="Nagrani S."/>
            <person name="Purkayastha A."/>
            <person name="Rajasimha H.K."/>
            <person name="Shallom J.M."/>
            <person name="Shallom S."/>
            <person name="Shukla M."/>
            <person name="Snyder E.E."/>
            <person name="Sobral B.W."/>
            <person name="Wattam A.R."/>
            <person name="Will R."/>
            <person name="Williams K."/>
            <person name="Yoo H."/>
            <person name="Bruce D."/>
            <person name="Detter C."/>
            <person name="Munk C."/>
            <person name="Brettin T.S."/>
        </authorList>
    </citation>
    <scope>NUCLEOTIDE SEQUENCE [LARGE SCALE GENOMIC DNA]</scope>
    <source>
        <strain>ATCC 23445 / NCTC 10510</strain>
    </source>
</reference>
<comment type="function">
    <text evidence="1">Hydrolyzes ribosome-free peptidyl-tRNAs (with 1 or more amino acids incorporated), which drop off the ribosome during protein synthesis, or as a result of ribosome stalling.</text>
</comment>
<comment type="function">
    <text evidence="1">Catalyzes the release of premature peptidyl moieties from peptidyl-tRNA molecules trapped in stalled 50S ribosomal subunits, and thus maintains levels of free tRNAs and 50S ribosomes.</text>
</comment>
<comment type="catalytic activity">
    <reaction evidence="1">
        <text>an N-acyl-L-alpha-aminoacyl-tRNA + H2O = an N-acyl-L-amino acid + a tRNA + H(+)</text>
        <dbReference type="Rhea" id="RHEA:54448"/>
        <dbReference type="Rhea" id="RHEA-COMP:10123"/>
        <dbReference type="Rhea" id="RHEA-COMP:13883"/>
        <dbReference type="ChEBI" id="CHEBI:15377"/>
        <dbReference type="ChEBI" id="CHEBI:15378"/>
        <dbReference type="ChEBI" id="CHEBI:59874"/>
        <dbReference type="ChEBI" id="CHEBI:78442"/>
        <dbReference type="ChEBI" id="CHEBI:138191"/>
        <dbReference type="EC" id="3.1.1.29"/>
    </reaction>
</comment>
<comment type="subunit">
    <text evidence="1">Monomer.</text>
</comment>
<comment type="subcellular location">
    <subcellularLocation>
        <location evidence="1">Cytoplasm</location>
    </subcellularLocation>
</comment>
<comment type="similarity">
    <text evidence="1">Belongs to the PTH family.</text>
</comment>
<accession>B0CHX5</accession>
<gene>
    <name evidence="1" type="primary">pth</name>
    <name type="ordered locus">BSUIS_A1595</name>
</gene>
<sequence length="250" mass="27560">MLLIAGLGNPGPQYAHNRHNIGFMAADEIFRRHRFSNWQKKFQAEIADGVIDGEKVLLVKPQTFMNLSGQSIGEAMRFYKLTPADLVVIYDELDLVPGKLRIKTGGGPGGHNGIKSIDAHMQSFPGGQNYRRMRLGIGHPGAKELVHNYVLGDFAKADNEWLDTLMGAVADNVAMLARREDNSFMNRIALAMGDGNQRPGGVKTDPAQLEKAPPKAQSHIRQARQNQKKPNIPESGPMAEMLKKLLGKKD</sequence>
<evidence type="ECO:0000255" key="1">
    <source>
        <dbReference type="HAMAP-Rule" id="MF_00083"/>
    </source>
</evidence>
<evidence type="ECO:0000256" key="2">
    <source>
        <dbReference type="SAM" id="MobiDB-lite"/>
    </source>
</evidence>
<protein>
    <recommendedName>
        <fullName evidence="1">Peptidyl-tRNA hydrolase</fullName>
        <shortName evidence="1">Pth</shortName>
        <ecNumber evidence="1">3.1.1.29</ecNumber>
    </recommendedName>
</protein>
<feature type="chain" id="PRO_1000075331" description="Peptidyl-tRNA hydrolase">
    <location>
        <begin position="1"/>
        <end position="250"/>
    </location>
</feature>
<feature type="region of interest" description="Disordered" evidence="2">
    <location>
        <begin position="192"/>
        <end position="250"/>
    </location>
</feature>
<feature type="compositionally biased region" description="Polar residues" evidence="2">
    <location>
        <begin position="219"/>
        <end position="229"/>
    </location>
</feature>
<feature type="compositionally biased region" description="Basic and acidic residues" evidence="2">
    <location>
        <begin position="241"/>
        <end position="250"/>
    </location>
</feature>
<feature type="active site" description="Proton acceptor" evidence="1">
    <location>
        <position position="19"/>
    </location>
</feature>
<feature type="binding site" evidence="1">
    <location>
        <position position="14"/>
    </location>
    <ligand>
        <name>tRNA</name>
        <dbReference type="ChEBI" id="CHEBI:17843"/>
    </ligand>
</feature>
<feature type="binding site" evidence="1">
    <location>
        <position position="64"/>
    </location>
    <ligand>
        <name>tRNA</name>
        <dbReference type="ChEBI" id="CHEBI:17843"/>
    </ligand>
</feature>
<feature type="binding site" evidence="1">
    <location>
        <position position="66"/>
    </location>
    <ligand>
        <name>tRNA</name>
        <dbReference type="ChEBI" id="CHEBI:17843"/>
    </ligand>
</feature>
<feature type="binding site" evidence="1">
    <location>
        <position position="112"/>
    </location>
    <ligand>
        <name>tRNA</name>
        <dbReference type="ChEBI" id="CHEBI:17843"/>
    </ligand>
</feature>
<feature type="site" description="Discriminates between blocked and unblocked aminoacyl-tRNA" evidence="1">
    <location>
        <position position="9"/>
    </location>
</feature>
<feature type="site" description="Stabilizes the basic form of H active site to accept a proton" evidence="1">
    <location>
        <position position="91"/>
    </location>
</feature>
<dbReference type="EC" id="3.1.1.29" evidence="1"/>
<dbReference type="EMBL" id="CP000911">
    <property type="protein sequence ID" value="ABY38626.1"/>
    <property type="molecule type" value="Genomic_DNA"/>
</dbReference>
<dbReference type="RefSeq" id="WP_006071210.1">
    <property type="nucleotide sequence ID" value="NC_010169.1"/>
</dbReference>
<dbReference type="SMR" id="B0CHX5"/>
<dbReference type="KEGG" id="bmt:BSUIS_A1595"/>
<dbReference type="HOGENOM" id="CLU_062456_1_1_5"/>
<dbReference type="PRO" id="PR:B0CHX5"/>
<dbReference type="Proteomes" id="UP000008545">
    <property type="component" value="Chromosome I"/>
</dbReference>
<dbReference type="GO" id="GO:0005737">
    <property type="term" value="C:cytoplasm"/>
    <property type="evidence" value="ECO:0007669"/>
    <property type="project" value="UniProtKB-SubCell"/>
</dbReference>
<dbReference type="GO" id="GO:0004045">
    <property type="term" value="F:peptidyl-tRNA hydrolase activity"/>
    <property type="evidence" value="ECO:0007669"/>
    <property type="project" value="UniProtKB-UniRule"/>
</dbReference>
<dbReference type="GO" id="GO:0000049">
    <property type="term" value="F:tRNA binding"/>
    <property type="evidence" value="ECO:0007669"/>
    <property type="project" value="UniProtKB-UniRule"/>
</dbReference>
<dbReference type="GO" id="GO:0006515">
    <property type="term" value="P:protein quality control for misfolded or incompletely synthesized proteins"/>
    <property type="evidence" value="ECO:0007669"/>
    <property type="project" value="UniProtKB-UniRule"/>
</dbReference>
<dbReference type="GO" id="GO:0072344">
    <property type="term" value="P:rescue of stalled ribosome"/>
    <property type="evidence" value="ECO:0007669"/>
    <property type="project" value="UniProtKB-UniRule"/>
</dbReference>
<dbReference type="CDD" id="cd00462">
    <property type="entry name" value="PTH"/>
    <property type="match status" value="1"/>
</dbReference>
<dbReference type="FunFam" id="3.40.50.1470:FF:000001">
    <property type="entry name" value="Peptidyl-tRNA hydrolase"/>
    <property type="match status" value="1"/>
</dbReference>
<dbReference type="Gene3D" id="3.40.50.1470">
    <property type="entry name" value="Peptidyl-tRNA hydrolase"/>
    <property type="match status" value="1"/>
</dbReference>
<dbReference type="HAMAP" id="MF_00083">
    <property type="entry name" value="Pept_tRNA_hydro_bact"/>
    <property type="match status" value="1"/>
</dbReference>
<dbReference type="InterPro" id="IPR001328">
    <property type="entry name" value="Pept_tRNA_hydro"/>
</dbReference>
<dbReference type="InterPro" id="IPR018171">
    <property type="entry name" value="Pept_tRNA_hydro_CS"/>
</dbReference>
<dbReference type="InterPro" id="IPR036416">
    <property type="entry name" value="Pept_tRNA_hydro_sf"/>
</dbReference>
<dbReference type="NCBIfam" id="TIGR00447">
    <property type="entry name" value="pth"/>
    <property type="match status" value="1"/>
</dbReference>
<dbReference type="PANTHER" id="PTHR17224">
    <property type="entry name" value="PEPTIDYL-TRNA HYDROLASE"/>
    <property type="match status" value="1"/>
</dbReference>
<dbReference type="PANTHER" id="PTHR17224:SF1">
    <property type="entry name" value="PEPTIDYL-TRNA HYDROLASE"/>
    <property type="match status" value="1"/>
</dbReference>
<dbReference type="Pfam" id="PF01195">
    <property type="entry name" value="Pept_tRNA_hydro"/>
    <property type="match status" value="1"/>
</dbReference>
<dbReference type="SUPFAM" id="SSF53178">
    <property type="entry name" value="Peptidyl-tRNA hydrolase-like"/>
    <property type="match status" value="1"/>
</dbReference>
<dbReference type="PROSITE" id="PS01195">
    <property type="entry name" value="PEPT_TRNA_HYDROL_1"/>
    <property type="match status" value="1"/>
</dbReference>
<dbReference type="PROSITE" id="PS01196">
    <property type="entry name" value="PEPT_TRNA_HYDROL_2"/>
    <property type="match status" value="1"/>
</dbReference>
<proteinExistence type="inferred from homology"/>
<organism>
    <name type="scientific">Brucella suis (strain ATCC 23445 / NCTC 10510)</name>
    <dbReference type="NCBI Taxonomy" id="470137"/>
    <lineage>
        <taxon>Bacteria</taxon>
        <taxon>Pseudomonadati</taxon>
        <taxon>Pseudomonadota</taxon>
        <taxon>Alphaproteobacteria</taxon>
        <taxon>Hyphomicrobiales</taxon>
        <taxon>Brucellaceae</taxon>
        <taxon>Brucella/Ochrobactrum group</taxon>
        <taxon>Brucella</taxon>
    </lineage>
</organism>
<name>PTH_BRUSI</name>